<name>GIN1_MOUSE</name>
<comment type="alternative products">
    <event type="alternative splicing"/>
    <isoform>
        <id>Q8K259-1</id>
        <name>1</name>
        <sequence type="displayed"/>
    </isoform>
    <isoform>
        <id>Q8K259-2</id>
        <name>2</name>
        <sequence type="described" ref="VSP_033440"/>
    </isoform>
    <isoform>
        <id>Q8K259-3</id>
        <name>3</name>
        <sequence type="described" ref="VSP_033441 VSP_033442"/>
    </isoform>
</comment>
<sequence>MVRSGKNGDLHLKQIAYYKRTGEYHPTTLPSERSGIRRAAKKFVFKEKKLFYVGKDRKQNRLVVVSEEEKKKVLRECHENGPGVHHGISRTLTLVESGYYWTSVTNDVKQWVYACQHCQVAKNTVIVAPQQHLPMVGNPWSVVTVDLMGPFHTSNRSHVYAIIMTDLFTKWVMILPLCDVSASEISKAIINIFFLYGPPQKIIMDQRDEFIEQINVELYRLFGAKEIVISRASGSVNPAENTPSTIKTFLSKHCADHPNSWDEHLPALSFAFNVTHLEPNKNTPYFQMFNRNPCVLECPPEEGSEGTSVFARIVAAIREADGVVENKTPASSQMENNNSDELSKSKVVKKKAKQLNPFHLKVGHEVLRQRKNWWKDGRFQSEWVGPCVIDYITESGCAVLRDNTGTRLKRPIKMSHLRPYVRESSEQDSLYLLQGSIVADHDYIGLPEIPVGTYQANILVEDATIGIADNELLISSKDHELLEYRNSKISALVEDHSSLEKQTFSLLDSSNQVLEYLS</sequence>
<proteinExistence type="evidence at transcript level"/>
<organism>
    <name type="scientific">Mus musculus</name>
    <name type="common">Mouse</name>
    <dbReference type="NCBI Taxonomy" id="10090"/>
    <lineage>
        <taxon>Eukaryota</taxon>
        <taxon>Metazoa</taxon>
        <taxon>Chordata</taxon>
        <taxon>Craniata</taxon>
        <taxon>Vertebrata</taxon>
        <taxon>Euteleostomi</taxon>
        <taxon>Mammalia</taxon>
        <taxon>Eutheria</taxon>
        <taxon>Euarchontoglires</taxon>
        <taxon>Glires</taxon>
        <taxon>Rodentia</taxon>
        <taxon>Myomorpha</taxon>
        <taxon>Muroidea</taxon>
        <taxon>Muridae</taxon>
        <taxon>Murinae</taxon>
        <taxon>Mus</taxon>
        <taxon>Mus</taxon>
    </lineage>
</organism>
<feature type="chain" id="PRO_0000333018" description="Gypsy retrotransposon integrase-like protein 1">
    <location>
        <begin position="1"/>
        <end position="518"/>
    </location>
</feature>
<feature type="domain" description="Integrase catalytic" evidence="2">
    <location>
        <begin position="130"/>
        <end position="292"/>
    </location>
</feature>
<feature type="modified residue" description="Phosphoserine" evidence="1">
    <location>
        <position position="498"/>
    </location>
</feature>
<feature type="splice variant" id="VSP_033440" description="In isoform 2." evidence="3">
    <location>
        <begin position="112"/>
        <end position="200"/>
    </location>
</feature>
<feature type="splice variant" id="VSP_033441" description="In isoform 3." evidence="3">
    <original>YACQHC</original>
    <variation>WLPRRA</variation>
    <location>
        <begin position="113"/>
        <end position="118"/>
    </location>
</feature>
<feature type="splice variant" id="VSP_033442" description="In isoform 3." evidence="3">
    <location>
        <begin position="119"/>
        <end position="518"/>
    </location>
</feature>
<feature type="sequence conflict" description="In Ref. 1; BAE43402." evidence="4" ref="1">
    <original>N</original>
    <variation>S</variation>
    <location>
        <position position="60"/>
    </location>
</feature>
<feature type="sequence conflict" description="In Ref. 2; AAH33572." evidence="4" ref="2">
    <original>V</original>
    <variation>I</variation>
    <location>
        <position position="216"/>
    </location>
</feature>
<feature type="sequence conflict" description="In Ref. 1; BAE43402." evidence="4" ref="1">
    <original>K</original>
    <variation>Q</variation>
    <location>
        <position position="413"/>
    </location>
</feature>
<gene>
    <name type="primary">Gin1</name>
    <name type="synonym">Zh2c2</name>
</gene>
<keyword id="KW-0025">Alternative splicing</keyword>
<keyword id="KW-0597">Phosphoprotein</keyword>
<keyword id="KW-1185">Reference proteome</keyword>
<accession>Q8K259</accession>
<accession>Q3TEY8</accession>
<accession>Q3V2V3</accession>
<accession>Q8C3X6</accession>
<accession>Q9CXB6</accession>
<accession>Q9D5K2</accession>
<evidence type="ECO:0000250" key="1">
    <source>
        <dbReference type="UniProtKB" id="Q9NXP7"/>
    </source>
</evidence>
<evidence type="ECO:0000255" key="2">
    <source>
        <dbReference type="PROSITE-ProRule" id="PRU00457"/>
    </source>
</evidence>
<evidence type="ECO:0000303" key="3">
    <source>
    </source>
</evidence>
<evidence type="ECO:0000305" key="4"/>
<dbReference type="EMBL" id="AK015243">
    <property type="protein sequence ID" value="BAB29761.1"/>
    <property type="molecule type" value="mRNA"/>
</dbReference>
<dbReference type="EMBL" id="AK018404">
    <property type="protein sequence ID" value="BAB31197.1"/>
    <property type="molecule type" value="mRNA"/>
</dbReference>
<dbReference type="EMBL" id="AK084620">
    <property type="protein sequence ID" value="BAC39232.1"/>
    <property type="molecule type" value="mRNA"/>
</dbReference>
<dbReference type="EMBL" id="AK090002">
    <property type="protein sequence ID" value="BAE43402.1"/>
    <property type="molecule type" value="mRNA"/>
</dbReference>
<dbReference type="EMBL" id="AK169361">
    <property type="protein sequence ID" value="BAE41110.1"/>
    <property type="molecule type" value="mRNA"/>
</dbReference>
<dbReference type="EMBL" id="BC033572">
    <property type="protein sequence ID" value="AAH33572.1"/>
    <property type="molecule type" value="mRNA"/>
</dbReference>
<dbReference type="CCDS" id="CCDS35679.1">
    <molecule id="Q8K259-1"/>
</dbReference>
<dbReference type="CCDS" id="CCDS78662.1">
    <molecule id="Q8K259-2"/>
</dbReference>
<dbReference type="RefSeq" id="NP_001297702.1">
    <molecule id="Q8K259-2"/>
    <property type="nucleotide sequence ID" value="NM_001310773.1"/>
</dbReference>
<dbReference type="RefSeq" id="NP_080526.2">
    <molecule id="Q8K259-1"/>
    <property type="nucleotide sequence ID" value="NM_026250.3"/>
</dbReference>
<dbReference type="BioGRID" id="232969">
    <property type="interactions" value="1"/>
</dbReference>
<dbReference type="FunCoup" id="Q8K259">
    <property type="interactions" value="1308"/>
</dbReference>
<dbReference type="STRING" id="10090.ENSMUSP00000108464"/>
<dbReference type="PhosphoSitePlus" id="Q8K259"/>
<dbReference type="PaxDb" id="10090-ENSMUSP00000108464"/>
<dbReference type="PeptideAtlas" id="Q8K259"/>
<dbReference type="ProteomicsDB" id="267796">
    <molecule id="Q8K259-1"/>
</dbReference>
<dbReference type="ProteomicsDB" id="267797">
    <molecule id="Q8K259-2"/>
</dbReference>
<dbReference type="ProteomicsDB" id="267798">
    <molecule id="Q8K259-3"/>
</dbReference>
<dbReference type="Antibodypedia" id="48162">
    <property type="antibodies" value="55 antibodies from 13 providers"/>
</dbReference>
<dbReference type="DNASU" id="252876"/>
<dbReference type="Ensembl" id="ENSMUST00000027571.13">
    <molecule id="Q8K259-2"/>
    <property type="protein sequence ID" value="ENSMUSP00000027571.7"/>
    <property type="gene ID" value="ENSMUSG00000026333.15"/>
</dbReference>
<dbReference type="Ensembl" id="ENSMUST00000112842.8">
    <molecule id="Q8K259-3"/>
    <property type="protein sequence ID" value="ENSMUSP00000108461.2"/>
    <property type="gene ID" value="ENSMUSG00000026333.15"/>
</dbReference>
<dbReference type="Ensembl" id="ENSMUST00000112844.10">
    <molecule id="Q8K259-1"/>
    <property type="protein sequence ID" value="ENSMUSP00000108464.4"/>
    <property type="gene ID" value="ENSMUSG00000026333.15"/>
</dbReference>
<dbReference type="GeneID" id="252876"/>
<dbReference type="KEGG" id="mmu:252876"/>
<dbReference type="UCSC" id="uc007cfm.1">
    <molecule id="Q8K259-3"/>
    <property type="organism name" value="mouse"/>
</dbReference>
<dbReference type="UCSC" id="uc007cfn.1">
    <molecule id="Q8K259-1"/>
    <property type="organism name" value="mouse"/>
</dbReference>
<dbReference type="UCSC" id="uc011wpx.1">
    <molecule id="Q8K259-2"/>
    <property type="organism name" value="mouse"/>
</dbReference>
<dbReference type="AGR" id="MGI:2182036"/>
<dbReference type="CTD" id="54826"/>
<dbReference type="MGI" id="MGI:2182036">
    <property type="gene designation" value="Gin1"/>
</dbReference>
<dbReference type="VEuPathDB" id="HostDB:ENSMUSG00000026333"/>
<dbReference type="eggNOG" id="KOG0017">
    <property type="taxonomic scope" value="Eukaryota"/>
</dbReference>
<dbReference type="GeneTree" id="ENSGT00940000160670"/>
<dbReference type="HOGENOM" id="CLU_040181_0_0_1"/>
<dbReference type="InParanoid" id="Q8K259"/>
<dbReference type="OMA" id="YPNNWDD"/>
<dbReference type="OrthoDB" id="413122at2759"/>
<dbReference type="PhylomeDB" id="Q8K259"/>
<dbReference type="TreeFam" id="TF352301"/>
<dbReference type="BioGRID-ORCS" id="252876">
    <property type="hits" value="1 hit in 76 CRISPR screens"/>
</dbReference>
<dbReference type="PRO" id="PR:Q8K259"/>
<dbReference type="Proteomes" id="UP000000589">
    <property type="component" value="Chromosome 1"/>
</dbReference>
<dbReference type="RNAct" id="Q8K259">
    <property type="molecule type" value="protein"/>
</dbReference>
<dbReference type="Bgee" id="ENSMUSG00000026333">
    <property type="expression patterns" value="Expressed in spermatocyte and 228 other cell types or tissues"/>
</dbReference>
<dbReference type="ExpressionAtlas" id="Q8K259">
    <property type="expression patterns" value="baseline and differential"/>
</dbReference>
<dbReference type="GO" id="GO:0003676">
    <property type="term" value="F:nucleic acid binding"/>
    <property type="evidence" value="ECO:0007669"/>
    <property type="project" value="InterPro"/>
</dbReference>
<dbReference type="GO" id="GO:0015074">
    <property type="term" value="P:DNA integration"/>
    <property type="evidence" value="ECO:0007669"/>
    <property type="project" value="InterPro"/>
</dbReference>
<dbReference type="FunFam" id="1.10.340.70:FF:000001">
    <property type="entry name" value="Retrovirus-related Pol polyprotein from transposon gypsy-like Protein"/>
    <property type="match status" value="1"/>
</dbReference>
<dbReference type="Gene3D" id="1.10.340.70">
    <property type="match status" value="1"/>
</dbReference>
<dbReference type="Gene3D" id="3.30.420.10">
    <property type="entry name" value="Ribonuclease H-like superfamily/Ribonuclease H"/>
    <property type="match status" value="1"/>
</dbReference>
<dbReference type="InterPro" id="IPR001584">
    <property type="entry name" value="Integrase_cat-core"/>
</dbReference>
<dbReference type="InterPro" id="IPR041588">
    <property type="entry name" value="Integrase_H2C2"/>
</dbReference>
<dbReference type="InterPro" id="IPR050951">
    <property type="entry name" value="Retrovirus_Pol_polyprotein"/>
</dbReference>
<dbReference type="InterPro" id="IPR012337">
    <property type="entry name" value="RNaseH-like_sf"/>
</dbReference>
<dbReference type="InterPro" id="IPR036397">
    <property type="entry name" value="RNaseH_sf"/>
</dbReference>
<dbReference type="PANTHER" id="PTHR37984">
    <property type="entry name" value="PROTEIN CBG26694"/>
    <property type="match status" value="1"/>
</dbReference>
<dbReference type="PANTHER" id="PTHR37984:SF5">
    <property type="entry name" value="PROTEIN NYNRIN-LIKE"/>
    <property type="match status" value="1"/>
</dbReference>
<dbReference type="Pfam" id="PF17921">
    <property type="entry name" value="Integrase_H2C2"/>
    <property type="match status" value="1"/>
</dbReference>
<dbReference type="SUPFAM" id="SSF53098">
    <property type="entry name" value="Ribonuclease H-like"/>
    <property type="match status" value="1"/>
</dbReference>
<dbReference type="PROSITE" id="PS50994">
    <property type="entry name" value="INTEGRASE"/>
    <property type="match status" value="1"/>
</dbReference>
<reference key="1">
    <citation type="journal article" date="2005" name="Science">
        <title>The transcriptional landscape of the mammalian genome.</title>
        <authorList>
            <person name="Carninci P."/>
            <person name="Kasukawa T."/>
            <person name="Katayama S."/>
            <person name="Gough J."/>
            <person name="Frith M.C."/>
            <person name="Maeda N."/>
            <person name="Oyama R."/>
            <person name="Ravasi T."/>
            <person name="Lenhard B."/>
            <person name="Wells C."/>
            <person name="Kodzius R."/>
            <person name="Shimokawa K."/>
            <person name="Bajic V.B."/>
            <person name="Brenner S.E."/>
            <person name="Batalov S."/>
            <person name="Forrest A.R."/>
            <person name="Zavolan M."/>
            <person name="Davis M.J."/>
            <person name="Wilming L.G."/>
            <person name="Aidinis V."/>
            <person name="Allen J.E."/>
            <person name="Ambesi-Impiombato A."/>
            <person name="Apweiler R."/>
            <person name="Aturaliya R.N."/>
            <person name="Bailey T.L."/>
            <person name="Bansal M."/>
            <person name="Baxter L."/>
            <person name="Beisel K.W."/>
            <person name="Bersano T."/>
            <person name="Bono H."/>
            <person name="Chalk A.M."/>
            <person name="Chiu K.P."/>
            <person name="Choudhary V."/>
            <person name="Christoffels A."/>
            <person name="Clutterbuck D.R."/>
            <person name="Crowe M.L."/>
            <person name="Dalla E."/>
            <person name="Dalrymple B.P."/>
            <person name="de Bono B."/>
            <person name="Della Gatta G."/>
            <person name="di Bernardo D."/>
            <person name="Down T."/>
            <person name="Engstrom P."/>
            <person name="Fagiolini M."/>
            <person name="Faulkner G."/>
            <person name="Fletcher C.F."/>
            <person name="Fukushima T."/>
            <person name="Furuno M."/>
            <person name="Futaki S."/>
            <person name="Gariboldi M."/>
            <person name="Georgii-Hemming P."/>
            <person name="Gingeras T.R."/>
            <person name="Gojobori T."/>
            <person name="Green R.E."/>
            <person name="Gustincich S."/>
            <person name="Harbers M."/>
            <person name="Hayashi Y."/>
            <person name="Hensch T.K."/>
            <person name="Hirokawa N."/>
            <person name="Hill D."/>
            <person name="Huminiecki L."/>
            <person name="Iacono M."/>
            <person name="Ikeo K."/>
            <person name="Iwama A."/>
            <person name="Ishikawa T."/>
            <person name="Jakt M."/>
            <person name="Kanapin A."/>
            <person name="Katoh M."/>
            <person name="Kawasawa Y."/>
            <person name="Kelso J."/>
            <person name="Kitamura H."/>
            <person name="Kitano H."/>
            <person name="Kollias G."/>
            <person name="Krishnan S.P."/>
            <person name="Kruger A."/>
            <person name="Kummerfeld S.K."/>
            <person name="Kurochkin I.V."/>
            <person name="Lareau L.F."/>
            <person name="Lazarevic D."/>
            <person name="Lipovich L."/>
            <person name="Liu J."/>
            <person name="Liuni S."/>
            <person name="McWilliam S."/>
            <person name="Madan Babu M."/>
            <person name="Madera M."/>
            <person name="Marchionni L."/>
            <person name="Matsuda H."/>
            <person name="Matsuzawa S."/>
            <person name="Miki H."/>
            <person name="Mignone F."/>
            <person name="Miyake S."/>
            <person name="Morris K."/>
            <person name="Mottagui-Tabar S."/>
            <person name="Mulder N."/>
            <person name="Nakano N."/>
            <person name="Nakauchi H."/>
            <person name="Ng P."/>
            <person name="Nilsson R."/>
            <person name="Nishiguchi S."/>
            <person name="Nishikawa S."/>
            <person name="Nori F."/>
            <person name="Ohara O."/>
            <person name="Okazaki Y."/>
            <person name="Orlando V."/>
            <person name="Pang K.C."/>
            <person name="Pavan W.J."/>
            <person name="Pavesi G."/>
            <person name="Pesole G."/>
            <person name="Petrovsky N."/>
            <person name="Piazza S."/>
            <person name="Reed J."/>
            <person name="Reid J.F."/>
            <person name="Ring B.Z."/>
            <person name="Ringwald M."/>
            <person name="Rost B."/>
            <person name="Ruan Y."/>
            <person name="Salzberg S.L."/>
            <person name="Sandelin A."/>
            <person name="Schneider C."/>
            <person name="Schoenbach C."/>
            <person name="Sekiguchi K."/>
            <person name="Semple C.A."/>
            <person name="Seno S."/>
            <person name="Sessa L."/>
            <person name="Sheng Y."/>
            <person name="Shibata Y."/>
            <person name="Shimada H."/>
            <person name="Shimada K."/>
            <person name="Silva D."/>
            <person name="Sinclair B."/>
            <person name="Sperling S."/>
            <person name="Stupka E."/>
            <person name="Sugiura K."/>
            <person name="Sultana R."/>
            <person name="Takenaka Y."/>
            <person name="Taki K."/>
            <person name="Tammoja K."/>
            <person name="Tan S.L."/>
            <person name="Tang S."/>
            <person name="Taylor M.S."/>
            <person name="Tegner J."/>
            <person name="Teichmann S.A."/>
            <person name="Ueda H.R."/>
            <person name="van Nimwegen E."/>
            <person name="Verardo R."/>
            <person name="Wei C.L."/>
            <person name="Yagi K."/>
            <person name="Yamanishi H."/>
            <person name="Zabarovsky E."/>
            <person name="Zhu S."/>
            <person name="Zimmer A."/>
            <person name="Hide W."/>
            <person name="Bult C."/>
            <person name="Grimmond S.M."/>
            <person name="Teasdale R.D."/>
            <person name="Liu E.T."/>
            <person name="Brusic V."/>
            <person name="Quackenbush J."/>
            <person name="Wahlestedt C."/>
            <person name="Mattick J.S."/>
            <person name="Hume D.A."/>
            <person name="Kai C."/>
            <person name="Sasaki D."/>
            <person name="Tomaru Y."/>
            <person name="Fukuda S."/>
            <person name="Kanamori-Katayama M."/>
            <person name="Suzuki M."/>
            <person name="Aoki J."/>
            <person name="Arakawa T."/>
            <person name="Iida J."/>
            <person name="Imamura K."/>
            <person name="Itoh M."/>
            <person name="Kato T."/>
            <person name="Kawaji H."/>
            <person name="Kawagashira N."/>
            <person name="Kawashima T."/>
            <person name="Kojima M."/>
            <person name="Kondo S."/>
            <person name="Konno H."/>
            <person name="Nakano K."/>
            <person name="Ninomiya N."/>
            <person name="Nishio T."/>
            <person name="Okada M."/>
            <person name="Plessy C."/>
            <person name="Shibata K."/>
            <person name="Shiraki T."/>
            <person name="Suzuki S."/>
            <person name="Tagami M."/>
            <person name="Waki K."/>
            <person name="Watahiki A."/>
            <person name="Okamura-Oho Y."/>
            <person name="Suzuki H."/>
            <person name="Kawai J."/>
            <person name="Hayashizaki Y."/>
        </authorList>
    </citation>
    <scope>NUCLEOTIDE SEQUENCE [LARGE SCALE MRNA] (ISOFORMS 1; 2 AND 3)</scope>
    <source>
        <strain>C57BL/6J</strain>
        <tissue>Amnion</tissue>
        <tissue>Heart</tissue>
        <tissue>Lung</tissue>
        <tissue>Testis</tissue>
        <tissue>Urinary bladder</tissue>
    </source>
</reference>
<reference key="2">
    <citation type="journal article" date="2004" name="Genome Res.">
        <title>The status, quality, and expansion of the NIH full-length cDNA project: the Mammalian Gene Collection (MGC).</title>
        <authorList>
            <consortium name="The MGC Project Team"/>
        </authorList>
    </citation>
    <scope>NUCLEOTIDE SEQUENCE [LARGE SCALE MRNA] (ISOFORM 1)</scope>
    <source>
        <strain>Czech II</strain>
        <tissue>Mammary tumor</tissue>
    </source>
</reference>
<protein>
    <recommendedName>
        <fullName>Gypsy retrotransposon integrase-like protein 1</fullName>
        <shortName>GIN-1</shortName>
    </recommendedName>
    <alternativeName>
        <fullName>Zinc finger H2C2 domain-containing protein</fullName>
    </alternativeName>
</protein>